<evidence type="ECO:0000255" key="1">
    <source>
        <dbReference type="HAMAP-Rule" id="MF_00148"/>
    </source>
</evidence>
<comment type="function">
    <text evidence="1">Excises uracil residues from the DNA which can arise as a result of misincorporation of dUMP residues by DNA polymerase or due to deamination of cytosine.</text>
</comment>
<comment type="catalytic activity">
    <reaction evidence="1">
        <text>Hydrolyzes single-stranded DNA or mismatched double-stranded DNA and polynucleotides, releasing free uracil.</text>
        <dbReference type="EC" id="3.2.2.27"/>
    </reaction>
</comment>
<comment type="subcellular location">
    <subcellularLocation>
        <location evidence="1">Cytoplasm</location>
    </subcellularLocation>
</comment>
<comment type="similarity">
    <text evidence="1">Belongs to the uracil-DNA glycosylase (UDG) superfamily. UNG family.</text>
</comment>
<protein>
    <recommendedName>
        <fullName evidence="1">Uracil-DNA glycosylase</fullName>
        <shortName evidence="1">UDG</shortName>
        <ecNumber evidence="1">3.2.2.27</ecNumber>
    </recommendedName>
</protein>
<organism>
    <name type="scientific">Glaesserella parasuis serovar 5 (strain SH0165)</name>
    <name type="common">Haemophilus parasuis</name>
    <dbReference type="NCBI Taxonomy" id="557723"/>
    <lineage>
        <taxon>Bacteria</taxon>
        <taxon>Pseudomonadati</taxon>
        <taxon>Pseudomonadota</taxon>
        <taxon>Gammaproteobacteria</taxon>
        <taxon>Pasteurellales</taxon>
        <taxon>Pasteurellaceae</taxon>
        <taxon>Glaesserella</taxon>
    </lineage>
</organism>
<name>UNG_GLAP5</name>
<proteinExistence type="inferred from homology"/>
<keyword id="KW-0963">Cytoplasm</keyword>
<keyword id="KW-0227">DNA damage</keyword>
<keyword id="KW-0234">DNA repair</keyword>
<keyword id="KW-0378">Hydrolase</keyword>
<keyword id="KW-1185">Reference proteome</keyword>
<gene>
    <name evidence="1" type="primary">ung</name>
    <name type="ordered locus">HAPS_1283</name>
</gene>
<reference key="1">
    <citation type="journal article" date="2009" name="J. Bacteriol.">
        <title>Complete genome sequence of Haemophilus parasuis SH0165.</title>
        <authorList>
            <person name="Yue M."/>
            <person name="Yang F."/>
            <person name="Yang J."/>
            <person name="Bei W."/>
            <person name="Cai X."/>
            <person name="Chen L."/>
            <person name="Dong J."/>
            <person name="Zhou R."/>
            <person name="Jin M."/>
            <person name="Jin Q."/>
            <person name="Chen H."/>
        </authorList>
    </citation>
    <scope>NUCLEOTIDE SEQUENCE [LARGE SCALE GENOMIC DNA]</scope>
    <source>
        <strain>SH0165</strain>
    </source>
</reference>
<dbReference type="EC" id="3.2.2.27" evidence="1"/>
<dbReference type="EMBL" id="CP001321">
    <property type="protein sequence ID" value="ACL32875.1"/>
    <property type="molecule type" value="Genomic_DNA"/>
</dbReference>
<dbReference type="RefSeq" id="WP_005711048.1">
    <property type="nucleotide sequence ID" value="NC_011852.1"/>
</dbReference>
<dbReference type="SMR" id="B8F6C3"/>
<dbReference type="STRING" id="557723.HAPS_1283"/>
<dbReference type="GeneID" id="66618246"/>
<dbReference type="KEGG" id="hap:HAPS_1283"/>
<dbReference type="HOGENOM" id="CLU_032162_3_1_6"/>
<dbReference type="Proteomes" id="UP000006743">
    <property type="component" value="Chromosome"/>
</dbReference>
<dbReference type="GO" id="GO:0005737">
    <property type="term" value="C:cytoplasm"/>
    <property type="evidence" value="ECO:0007669"/>
    <property type="project" value="UniProtKB-SubCell"/>
</dbReference>
<dbReference type="GO" id="GO:0004844">
    <property type="term" value="F:uracil DNA N-glycosylase activity"/>
    <property type="evidence" value="ECO:0007669"/>
    <property type="project" value="UniProtKB-UniRule"/>
</dbReference>
<dbReference type="GO" id="GO:0097510">
    <property type="term" value="P:base-excision repair, AP site formation via deaminated base removal"/>
    <property type="evidence" value="ECO:0007669"/>
    <property type="project" value="TreeGrafter"/>
</dbReference>
<dbReference type="CDD" id="cd10027">
    <property type="entry name" value="UDG-F1-like"/>
    <property type="match status" value="1"/>
</dbReference>
<dbReference type="FunFam" id="3.40.470.10:FF:000001">
    <property type="entry name" value="Uracil-DNA glycosylase"/>
    <property type="match status" value="1"/>
</dbReference>
<dbReference type="Gene3D" id="3.40.470.10">
    <property type="entry name" value="Uracil-DNA glycosylase-like domain"/>
    <property type="match status" value="1"/>
</dbReference>
<dbReference type="HAMAP" id="MF_00148">
    <property type="entry name" value="UDG"/>
    <property type="match status" value="1"/>
</dbReference>
<dbReference type="InterPro" id="IPR002043">
    <property type="entry name" value="UDG_fam1"/>
</dbReference>
<dbReference type="InterPro" id="IPR018085">
    <property type="entry name" value="Ura-DNA_Glyclase_AS"/>
</dbReference>
<dbReference type="InterPro" id="IPR005122">
    <property type="entry name" value="Uracil-DNA_glycosylase-like"/>
</dbReference>
<dbReference type="InterPro" id="IPR036895">
    <property type="entry name" value="Uracil-DNA_glycosylase-like_sf"/>
</dbReference>
<dbReference type="NCBIfam" id="NF003588">
    <property type="entry name" value="PRK05254.1-1"/>
    <property type="match status" value="1"/>
</dbReference>
<dbReference type="NCBIfam" id="NF003589">
    <property type="entry name" value="PRK05254.1-2"/>
    <property type="match status" value="1"/>
</dbReference>
<dbReference type="NCBIfam" id="NF003591">
    <property type="entry name" value="PRK05254.1-4"/>
    <property type="match status" value="1"/>
</dbReference>
<dbReference type="NCBIfam" id="NF003592">
    <property type="entry name" value="PRK05254.1-5"/>
    <property type="match status" value="1"/>
</dbReference>
<dbReference type="NCBIfam" id="TIGR00628">
    <property type="entry name" value="ung"/>
    <property type="match status" value="1"/>
</dbReference>
<dbReference type="PANTHER" id="PTHR11264">
    <property type="entry name" value="URACIL-DNA GLYCOSYLASE"/>
    <property type="match status" value="1"/>
</dbReference>
<dbReference type="PANTHER" id="PTHR11264:SF0">
    <property type="entry name" value="URACIL-DNA GLYCOSYLASE"/>
    <property type="match status" value="1"/>
</dbReference>
<dbReference type="Pfam" id="PF03167">
    <property type="entry name" value="UDG"/>
    <property type="match status" value="1"/>
</dbReference>
<dbReference type="SMART" id="SM00986">
    <property type="entry name" value="UDG"/>
    <property type="match status" value="1"/>
</dbReference>
<dbReference type="SMART" id="SM00987">
    <property type="entry name" value="UreE_C"/>
    <property type="match status" value="1"/>
</dbReference>
<dbReference type="SUPFAM" id="SSF52141">
    <property type="entry name" value="Uracil-DNA glycosylase-like"/>
    <property type="match status" value="1"/>
</dbReference>
<dbReference type="PROSITE" id="PS00130">
    <property type="entry name" value="U_DNA_GLYCOSYLASE"/>
    <property type="match status" value="1"/>
</dbReference>
<feature type="chain" id="PRO_1000199786" description="Uracil-DNA glycosylase">
    <location>
        <begin position="1"/>
        <end position="220"/>
    </location>
</feature>
<feature type="active site" description="Proton acceptor" evidence="1">
    <location>
        <position position="61"/>
    </location>
</feature>
<sequence>MNSWTDAIGEEKTQPYFQHILQYVHQERLVGKVIYPPQNEVFSAFALTEFKDVKVVILGQDPYHGPNQAHGLSFSVKPGIVPPPSLVNMYKELSQDVGFQIPSHGYLIEWAKQGVLLLNTVLTVEQGKAHSHANIGWETFTDKVIHQLNLHRENLVFLLWGSHAQKKGQFIDRSRHCVLTAPHPSPLSAHRGFLGCRHFSKTNDYLRSHGVEEINWQLPL</sequence>
<accession>B8F6C3</accession>